<comment type="subcellular location">
    <subcellularLocation>
        <location evidence="1">Cell inner membrane</location>
        <topology evidence="1">Multi-pass membrane protein</topology>
    </subcellularLocation>
</comment>
<comment type="similarity">
    <text evidence="1">Belongs to the UPF0208 family.</text>
</comment>
<sequence>MSTPDNRSVNFFSLFRRGQHYSKTWPLEKRLAPVFVENRVIKMTRYAIRFMPPIAVFTLCWQIALGGQLGPAVATALFALSLPMQGLWWLGKRSVTPLPPAILNWFYEVRGKLQESGQVLAPVEGKPDYQALADTLKRAFKQLDKTFLDDL</sequence>
<feature type="chain" id="PRO_1000064968" description="UPF0208 membrane protein YfbV">
    <location>
        <begin position="1"/>
        <end position="151"/>
    </location>
</feature>
<feature type="transmembrane region" description="Helical" evidence="1">
    <location>
        <begin position="46"/>
        <end position="65"/>
    </location>
</feature>
<feature type="transmembrane region" description="Helical" evidence="1">
    <location>
        <begin position="69"/>
        <end position="91"/>
    </location>
</feature>
<dbReference type="EMBL" id="CP000802">
    <property type="protein sequence ID" value="ABV06717.1"/>
    <property type="molecule type" value="Genomic_DNA"/>
</dbReference>
<dbReference type="RefSeq" id="WP_000106627.1">
    <property type="nucleotide sequence ID" value="NC_009800.1"/>
</dbReference>
<dbReference type="GeneID" id="93774879"/>
<dbReference type="KEGG" id="ecx:EcHS_A2444"/>
<dbReference type="HOGENOM" id="CLU_128746_0_0_6"/>
<dbReference type="GO" id="GO:0005886">
    <property type="term" value="C:plasma membrane"/>
    <property type="evidence" value="ECO:0007669"/>
    <property type="project" value="UniProtKB-SubCell"/>
</dbReference>
<dbReference type="HAMAP" id="MF_01101">
    <property type="entry name" value="UPF0208"/>
    <property type="match status" value="1"/>
</dbReference>
<dbReference type="InterPro" id="IPR007334">
    <property type="entry name" value="UPF0208"/>
</dbReference>
<dbReference type="NCBIfam" id="NF002493">
    <property type="entry name" value="PRK01816.1"/>
    <property type="match status" value="1"/>
</dbReference>
<dbReference type="Pfam" id="PF04217">
    <property type="entry name" value="DUF412"/>
    <property type="match status" value="1"/>
</dbReference>
<protein>
    <recommendedName>
        <fullName evidence="1">UPF0208 membrane protein YfbV</fullName>
    </recommendedName>
</protein>
<name>YFBV_ECOHS</name>
<evidence type="ECO:0000255" key="1">
    <source>
        <dbReference type="HAMAP-Rule" id="MF_01101"/>
    </source>
</evidence>
<proteinExistence type="inferred from homology"/>
<reference key="1">
    <citation type="journal article" date="2008" name="J. Bacteriol.">
        <title>The pangenome structure of Escherichia coli: comparative genomic analysis of E. coli commensal and pathogenic isolates.</title>
        <authorList>
            <person name="Rasko D.A."/>
            <person name="Rosovitz M.J."/>
            <person name="Myers G.S.A."/>
            <person name="Mongodin E.F."/>
            <person name="Fricke W.F."/>
            <person name="Gajer P."/>
            <person name="Crabtree J."/>
            <person name="Sebaihia M."/>
            <person name="Thomson N.R."/>
            <person name="Chaudhuri R."/>
            <person name="Henderson I.R."/>
            <person name="Sperandio V."/>
            <person name="Ravel J."/>
        </authorList>
    </citation>
    <scope>NUCLEOTIDE SEQUENCE [LARGE SCALE GENOMIC DNA]</scope>
    <source>
        <strain>HS</strain>
    </source>
</reference>
<accession>A8A2G3</accession>
<gene>
    <name evidence="1" type="primary">yfbV</name>
    <name type="ordered locus">EcHS_A2444</name>
</gene>
<keyword id="KW-0997">Cell inner membrane</keyword>
<keyword id="KW-1003">Cell membrane</keyword>
<keyword id="KW-0472">Membrane</keyword>
<keyword id="KW-0812">Transmembrane</keyword>
<keyword id="KW-1133">Transmembrane helix</keyword>
<organism>
    <name type="scientific">Escherichia coli O9:H4 (strain HS)</name>
    <dbReference type="NCBI Taxonomy" id="331112"/>
    <lineage>
        <taxon>Bacteria</taxon>
        <taxon>Pseudomonadati</taxon>
        <taxon>Pseudomonadota</taxon>
        <taxon>Gammaproteobacteria</taxon>
        <taxon>Enterobacterales</taxon>
        <taxon>Enterobacteriaceae</taxon>
        <taxon>Escherichia</taxon>
    </lineage>
</organism>